<evidence type="ECO:0000255" key="1">
    <source>
        <dbReference type="HAMAP-Rule" id="MF_00197"/>
    </source>
</evidence>
<comment type="function">
    <text evidence="1">Catalyzes the stereoinversion of LL-2,6-diaminopimelate (L,L-DAP) to meso-diaminopimelate (meso-DAP), a precursor of L-lysine and an essential component of the bacterial peptidoglycan.</text>
</comment>
<comment type="catalytic activity">
    <reaction evidence="1">
        <text>(2S,6S)-2,6-diaminopimelate = meso-2,6-diaminopimelate</text>
        <dbReference type="Rhea" id="RHEA:15393"/>
        <dbReference type="ChEBI" id="CHEBI:57609"/>
        <dbReference type="ChEBI" id="CHEBI:57791"/>
        <dbReference type="EC" id="5.1.1.7"/>
    </reaction>
</comment>
<comment type="pathway">
    <text evidence="1">Amino-acid biosynthesis; L-lysine biosynthesis via DAP pathway; DL-2,6-diaminopimelate from LL-2,6-diaminopimelate: step 1/1.</text>
</comment>
<comment type="subunit">
    <text evidence="1">Homodimer.</text>
</comment>
<comment type="subcellular location">
    <subcellularLocation>
        <location evidence="1">Cytoplasm</location>
    </subcellularLocation>
</comment>
<comment type="similarity">
    <text evidence="1">Belongs to the diaminopimelate epimerase family.</text>
</comment>
<protein>
    <recommendedName>
        <fullName evidence="1">Diaminopimelate epimerase</fullName>
        <shortName evidence="1">DAP epimerase</shortName>
        <ecNumber evidence="1">5.1.1.7</ecNumber>
    </recommendedName>
    <alternativeName>
        <fullName evidence="1">PLP-independent amino acid racemase</fullName>
    </alternativeName>
</protein>
<feature type="chain" id="PRO_1000077706" description="Diaminopimelate epimerase">
    <location>
        <begin position="1"/>
        <end position="280"/>
    </location>
</feature>
<feature type="active site" description="Proton donor" evidence="1">
    <location>
        <position position="74"/>
    </location>
</feature>
<feature type="active site" description="Proton acceptor" evidence="1">
    <location>
        <position position="223"/>
    </location>
</feature>
<feature type="binding site" evidence="1">
    <location>
        <position position="12"/>
    </location>
    <ligand>
        <name>substrate</name>
    </ligand>
</feature>
<feature type="binding site" evidence="1">
    <location>
        <position position="45"/>
    </location>
    <ligand>
        <name>substrate</name>
    </ligand>
</feature>
<feature type="binding site" evidence="1">
    <location>
        <position position="65"/>
    </location>
    <ligand>
        <name>substrate</name>
    </ligand>
</feature>
<feature type="binding site" evidence="1">
    <location>
        <begin position="75"/>
        <end position="76"/>
    </location>
    <ligand>
        <name>substrate</name>
    </ligand>
</feature>
<feature type="binding site" evidence="1">
    <location>
        <position position="163"/>
    </location>
    <ligand>
        <name>substrate</name>
    </ligand>
</feature>
<feature type="binding site" evidence="1">
    <location>
        <position position="196"/>
    </location>
    <ligand>
        <name>substrate</name>
    </ligand>
</feature>
<feature type="binding site" evidence="1">
    <location>
        <begin position="214"/>
        <end position="215"/>
    </location>
    <ligand>
        <name>substrate</name>
    </ligand>
</feature>
<feature type="binding site" evidence="1">
    <location>
        <begin position="224"/>
        <end position="225"/>
    </location>
    <ligand>
        <name>substrate</name>
    </ligand>
</feature>
<feature type="site" description="Could be important to modulate the pK values of the two catalytic cysteine residues" evidence="1">
    <location>
        <position position="165"/>
    </location>
</feature>
<feature type="site" description="Could be important to modulate the pK values of the two catalytic cysteine residues" evidence="1">
    <location>
        <position position="214"/>
    </location>
</feature>
<feature type="site" description="Important for dimerization" evidence="1">
    <location>
        <position position="274"/>
    </location>
</feature>
<dbReference type="EC" id="5.1.1.7" evidence="1"/>
<dbReference type="EMBL" id="CP000821">
    <property type="protein sequence ID" value="ABV38733.1"/>
    <property type="molecule type" value="Genomic_DNA"/>
</dbReference>
<dbReference type="RefSeq" id="WP_012144462.1">
    <property type="nucleotide sequence ID" value="NC_009831.1"/>
</dbReference>
<dbReference type="SMR" id="A8G0W0"/>
<dbReference type="STRING" id="425104.Ssed_4129"/>
<dbReference type="KEGG" id="sse:Ssed_4129"/>
<dbReference type="eggNOG" id="COG0253">
    <property type="taxonomic scope" value="Bacteria"/>
</dbReference>
<dbReference type="HOGENOM" id="CLU_053306_1_1_6"/>
<dbReference type="OrthoDB" id="9805408at2"/>
<dbReference type="UniPathway" id="UPA00034">
    <property type="reaction ID" value="UER00025"/>
</dbReference>
<dbReference type="Proteomes" id="UP000002015">
    <property type="component" value="Chromosome"/>
</dbReference>
<dbReference type="GO" id="GO:0005829">
    <property type="term" value="C:cytosol"/>
    <property type="evidence" value="ECO:0007669"/>
    <property type="project" value="TreeGrafter"/>
</dbReference>
<dbReference type="GO" id="GO:0008837">
    <property type="term" value="F:diaminopimelate epimerase activity"/>
    <property type="evidence" value="ECO:0007669"/>
    <property type="project" value="UniProtKB-UniRule"/>
</dbReference>
<dbReference type="GO" id="GO:0009089">
    <property type="term" value="P:lysine biosynthetic process via diaminopimelate"/>
    <property type="evidence" value="ECO:0007669"/>
    <property type="project" value="UniProtKB-UniRule"/>
</dbReference>
<dbReference type="FunFam" id="3.10.310.10:FF:000001">
    <property type="entry name" value="Diaminopimelate epimerase"/>
    <property type="match status" value="1"/>
</dbReference>
<dbReference type="FunFam" id="3.10.310.10:FF:000002">
    <property type="entry name" value="Diaminopimelate epimerase"/>
    <property type="match status" value="1"/>
</dbReference>
<dbReference type="Gene3D" id="3.10.310.10">
    <property type="entry name" value="Diaminopimelate Epimerase, Chain A, domain 1"/>
    <property type="match status" value="2"/>
</dbReference>
<dbReference type="HAMAP" id="MF_00197">
    <property type="entry name" value="DAP_epimerase"/>
    <property type="match status" value="1"/>
</dbReference>
<dbReference type="InterPro" id="IPR018510">
    <property type="entry name" value="DAP_epimerase_AS"/>
</dbReference>
<dbReference type="InterPro" id="IPR001653">
    <property type="entry name" value="DAP_epimerase_DapF"/>
</dbReference>
<dbReference type="NCBIfam" id="TIGR00652">
    <property type="entry name" value="DapF"/>
    <property type="match status" value="1"/>
</dbReference>
<dbReference type="PANTHER" id="PTHR31689:SF0">
    <property type="entry name" value="DIAMINOPIMELATE EPIMERASE"/>
    <property type="match status" value="1"/>
</dbReference>
<dbReference type="PANTHER" id="PTHR31689">
    <property type="entry name" value="DIAMINOPIMELATE EPIMERASE, CHLOROPLASTIC"/>
    <property type="match status" value="1"/>
</dbReference>
<dbReference type="Pfam" id="PF01678">
    <property type="entry name" value="DAP_epimerase"/>
    <property type="match status" value="2"/>
</dbReference>
<dbReference type="SUPFAM" id="SSF54506">
    <property type="entry name" value="Diaminopimelate epimerase-like"/>
    <property type="match status" value="1"/>
</dbReference>
<dbReference type="PROSITE" id="PS01326">
    <property type="entry name" value="DAP_EPIMERASE"/>
    <property type="match status" value="1"/>
</dbReference>
<proteinExistence type="inferred from homology"/>
<keyword id="KW-0028">Amino-acid biosynthesis</keyword>
<keyword id="KW-0963">Cytoplasm</keyword>
<keyword id="KW-0413">Isomerase</keyword>
<keyword id="KW-0457">Lysine biosynthesis</keyword>
<keyword id="KW-1185">Reference proteome</keyword>
<name>DAPF_SHESH</name>
<reference key="1">
    <citation type="submission" date="2007-08" db="EMBL/GenBank/DDBJ databases">
        <title>Complete sequence of Shewanella sediminis HAW-EB3.</title>
        <authorList>
            <consortium name="US DOE Joint Genome Institute"/>
            <person name="Copeland A."/>
            <person name="Lucas S."/>
            <person name="Lapidus A."/>
            <person name="Barry K."/>
            <person name="Glavina del Rio T."/>
            <person name="Dalin E."/>
            <person name="Tice H."/>
            <person name="Pitluck S."/>
            <person name="Chertkov O."/>
            <person name="Brettin T."/>
            <person name="Bruce D."/>
            <person name="Detter J.C."/>
            <person name="Han C."/>
            <person name="Schmutz J."/>
            <person name="Larimer F."/>
            <person name="Land M."/>
            <person name="Hauser L."/>
            <person name="Kyrpides N."/>
            <person name="Kim E."/>
            <person name="Zhao J.-S."/>
            <person name="Richardson P."/>
        </authorList>
    </citation>
    <scope>NUCLEOTIDE SEQUENCE [LARGE SCALE GENOMIC DNA]</scope>
    <source>
        <strain>HAW-EB3</strain>
    </source>
</reference>
<gene>
    <name evidence="1" type="primary">dapF</name>
    <name type="ordered locus">Ssed_4129</name>
</gene>
<organism>
    <name type="scientific">Shewanella sediminis (strain HAW-EB3)</name>
    <dbReference type="NCBI Taxonomy" id="425104"/>
    <lineage>
        <taxon>Bacteria</taxon>
        <taxon>Pseudomonadati</taxon>
        <taxon>Pseudomonadota</taxon>
        <taxon>Gammaproteobacteria</taxon>
        <taxon>Alteromonadales</taxon>
        <taxon>Shewanellaceae</taxon>
        <taxon>Shewanella</taxon>
    </lineage>
</organism>
<sequence>MIHFTKMHGLGNDFMVVDGVTQNVFFSPEQIKRLADRNFGIGFDQLLLVEPPYDPDLDFHYRIFNADGGEVEQCGNGARCFARFVRNKGLTNKQKIRVSTSNGKITLRLERDGNVTVNMGIPVLEPGRIPFNAKKMEKTYLLQATNPDSTMQTFLFGAVSMGNPHCVLDVEDIEAADVEGIGALLTRHERFPKGVNVGFMQIINSGHIKLRVYERGAAETLACGTGACAAAVVGQLQGKLDNCVRVDLPGGTLTINWEGEGKPLWMTGPAEHVYDGQIQQ</sequence>
<accession>A8G0W0</accession>